<proteinExistence type="inferred from homology"/>
<dbReference type="EMBL" id="CP000046">
    <property type="protein sequence ID" value="AAW36787.1"/>
    <property type="molecule type" value="Genomic_DNA"/>
</dbReference>
<dbReference type="RefSeq" id="WP_000752913.1">
    <property type="nucleotide sequence ID" value="NZ_JBGOFO010000003.1"/>
</dbReference>
<dbReference type="SMR" id="Q5HFD7"/>
<dbReference type="KEGG" id="sac:SACOL1680"/>
<dbReference type="HOGENOM" id="CLU_135567_0_3_9"/>
<dbReference type="Proteomes" id="UP000000530">
    <property type="component" value="Chromosome"/>
</dbReference>
<dbReference type="Gene3D" id="1.10.1470.10">
    <property type="entry name" value="YjbJ"/>
    <property type="match status" value="1"/>
</dbReference>
<dbReference type="InterPro" id="IPR008462">
    <property type="entry name" value="CsbD"/>
</dbReference>
<dbReference type="InterPro" id="IPR050423">
    <property type="entry name" value="UPF0337_stress_rsp"/>
</dbReference>
<dbReference type="InterPro" id="IPR036629">
    <property type="entry name" value="YjbJ_sf"/>
</dbReference>
<dbReference type="PANTHER" id="PTHR34977">
    <property type="entry name" value="UPF0337 PROTEIN YJBJ"/>
    <property type="match status" value="1"/>
</dbReference>
<dbReference type="PANTHER" id="PTHR34977:SF1">
    <property type="entry name" value="UPF0337 PROTEIN YJBJ"/>
    <property type="match status" value="1"/>
</dbReference>
<dbReference type="Pfam" id="PF05532">
    <property type="entry name" value="CsbD"/>
    <property type="match status" value="1"/>
</dbReference>
<dbReference type="SUPFAM" id="SSF69047">
    <property type="entry name" value="Hypothetical protein YjbJ"/>
    <property type="match status" value="1"/>
</dbReference>
<name>Y1680_STAAC</name>
<organism>
    <name type="scientific">Staphylococcus aureus (strain COL)</name>
    <dbReference type="NCBI Taxonomy" id="93062"/>
    <lineage>
        <taxon>Bacteria</taxon>
        <taxon>Bacillati</taxon>
        <taxon>Bacillota</taxon>
        <taxon>Bacilli</taxon>
        <taxon>Bacillales</taxon>
        <taxon>Staphylococcaceae</taxon>
        <taxon>Staphylococcus</taxon>
    </lineage>
</organism>
<feature type="chain" id="PRO_0000210032" description="UPF0337 protein SACOL1680">
    <location>
        <begin position="1"/>
        <end position="60"/>
    </location>
</feature>
<protein>
    <recommendedName>
        <fullName>UPF0337 protein SACOL1680</fullName>
    </recommendedName>
</protein>
<reference key="1">
    <citation type="journal article" date="2005" name="J. Bacteriol.">
        <title>Insights on evolution of virulence and resistance from the complete genome analysis of an early methicillin-resistant Staphylococcus aureus strain and a biofilm-producing methicillin-resistant Staphylococcus epidermidis strain.</title>
        <authorList>
            <person name="Gill S.R."/>
            <person name="Fouts D.E."/>
            <person name="Archer G.L."/>
            <person name="Mongodin E.F."/>
            <person name="DeBoy R.T."/>
            <person name="Ravel J."/>
            <person name="Paulsen I.T."/>
            <person name="Kolonay J.F."/>
            <person name="Brinkac L.M."/>
            <person name="Beanan M.J."/>
            <person name="Dodson R.J."/>
            <person name="Daugherty S.C."/>
            <person name="Madupu R."/>
            <person name="Angiuoli S.V."/>
            <person name="Durkin A.S."/>
            <person name="Haft D.H."/>
            <person name="Vamathevan J.J."/>
            <person name="Khouri H."/>
            <person name="Utterback T.R."/>
            <person name="Lee C."/>
            <person name="Dimitrov G."/>
            <person name="Jiang L."/>
            <person name="Qin H."/>
            <person name="Weidman J."/>
            <person name="Tran K."/>
            <person name="Kang K.H."/>
            <person name="Hance I.R."/>
            <person name="Nelson K.E."/>
            <person name="Fraser C.M."/>
        </authorList>
    </citation>
    <scope>NUCLEOTIDE SEQUENCE [LARGE SCALE GENOMIC DNA]</scope>
    <source>
        <strain>COL</strain>
    </source>
</reference>
<comment type="similarity">
    <text evidence="1">Belongs to the UPF0337 (CsbD) family.</text>
</comment>
<evidence type="ECO:0000305" key="1"/>
<sequence length="60" mass="6723">MADESKFDQFKGNVKETVGNVTDNKELEKEGQQDKVIGKAKEVVENAKNKITDAIDKLKK</sequence>
<accession>Q5HFD7</accession>
<gene>
    <name type="ordered locus">SACOL1680</name>
</gene>